<feature type="chain" id="PRO_0000220489" description="Inositol phosphate phosphatase SopB">
    <location>
        <begin position="1" status="less than"/>
        <end position="433" status="greater than"/>
    </location>
</feature>
<feature type="short sequence motif" description="CX5R motif">
    <location>
        <begin position="364"/>
        <end position="370"/>
    </location>
</feature>
<feature type="active site" evidence="2">
    <location>
        <position position="364"/>
    </location>
</feature>
<feature type="non-terminal residue">
    <location>
        <position position="1"/>
    </location>
</feature>
<feature type="non-terminal residue">
    <location>
        <position position="433"/>
    </location>
</feature>
<proteinExistence type="inferred from homology"/>
<organism>
    <name type="scientific">Salmonella blockley</name>
    <dbReference type="NCBI Taxonomy" id="57741"/>
    <lineage>
        <taxon>Bacteria</taxon>
        <taxon>Pseudomonadati</taxon>
        <taxon>Pseudomonadota</taxon>
        <taxon>Gammaproteobacteria</taxon>
        <taxon>Enterobacterales</taxon>
        <taxon>Enterobacteriaceae</taxon>
        <taxon>Salmonella</taxon>
    </lineage>
</organism>
<comment type="function">
    <text evidence="1">Converts phosphatidylinositol 3,4,5-trisphosphate (PtdIns 3,4,5-P3) to PtdIns 3-P and prevents the transition of PtdIns 3-P to PtdIns 3,5-P2. It is one of the known effectors injected by Salmonella into the host cell and is required for invasion and for an efficient generation and maintenance of Salmonella-containing vacuole (SVC). Alteration of the phosphoinositide composition of the plasma membrane causes membrane ruffling and actin cytoskeleton rearrangements. The persistence of PtdIns 3-P diverts the SCV from the endocytic pathway resulting in enlarged vesicles, which are essential to create a favorable environment where Salmonella can replicate and avoid immune defenses of the host cell (By similarity).</text>
</comment>
<comment type="subcellular location">
    <subcellularLocation>
        <location evidence="1">Secreted</location>
    </subcellularLocation>
    <text evidence="1">Secreted via the type III secretion system 1 (SPI-1 T3SS).</text>
</comment>
<comment type="domain">
    <text>Contains the consensus sequence Cys-X(5)-Arg characteristic of Mg-independent phosphatases.</text>
</comment>
<comment type="similarity">
    <text evidence="3">Belongs to the phosphatase IpgD/SopB family.</text>
</comment>
<accession>Q9RER2</accession>
<protein>
    <recommendedName>
        <fullName>Inositol phosphate phosphatase SopB</fullName>
        <ecNumber>3.1.3.-</ecNumber>
    </recommendedName>
    <alternativeName>
        <fullName>Effector protein SopB</fullName>
    </alternativeName>
</protein>
<name>SOPB_SALBL</name>
<dbReference type="EC" id="3.1.3.-"/>
<dbReference type="EMBL" id="AF213334">
    <property type="protein sequence ID" value="AAF21056.1"/>
    <property type="molecule type" value="Genomic_DNA"/>
</dbReference>
<dbReference type="SMR" id="Q9RER2"/>
<dbReference type="GO" id="GO:0005576">
    <property type="term" value="C:extracellular region"/>
    <property type="evidence" value="ECO:0007669"/>
    <property type="project" value="UniProtKB-SubCell"/>
</dbReference>
<dbReference type="GO" id="GO:0016791">
    <property type="term" value="F:phosphatase activity"/>
    <property type="evidence" value="ECO:0007669"/>
    <property type="project" value="InterPro"/>
</dbReference>
<dbReference type="Gene3D" id="1.20.58.450">
    <property type="entry name" value="Cell division control protein 42 homolog"/>
    <property type="match status" value="1"/>
</dbReference>
<dbReference type="InterPro" id="IPR008108">
    <property type="entry name" value="IpgD/SopB"/>
</dbReference>
<dbReference type="NCBIfam" id="NF011905">
    <property type="entry name" value="PRK15378.1"/>
    <property type="match status" value="1"/>
</dbReference>
<dbReference type="Pfam" id="PF05925">
    <property type="entry name" value="IpgD"/>
    <property type="match status" value="1"/>
</dbReference>
<dbReference type="PRINTS" id="PR01734">
    <property type="entry name" value="TYPE3OMBPROT"/>
</dbReference>
<keyword id="KW-0378">Hydrolase</keyword>
<keyword id="KW-0964">Secreted</keyword>
<keyword id="KW-0843">Virulence</keyword>
<evidence type="ECO:0000250" key="1"/>
<evidence type="ECO:0000255" key="2"/>
<evidence type="ECO:0000305" key="3"/>
<sequence>VLTSMANQMELAKVKADRPATKQEEAAAKALKKNLIELIAARTQQQDGLPAKEAHRFAAVAFRDAQVKQLNNQPWQTIKNTLTHNGHHYTNTQLPAAEMKIGAKDIFPSAYEGKGVCSWDTKNIHHANNLWMSTVSVHEDGKDKTLFCGIRHGVLSPYHEKDPLLRQVGAENKAKEVLTAALFSKPELLNKALAGEAVSLKLVSVGLLTASNIFGKEGTMVEDQMRAWQSLTQPGKMIHLKIRNKDGDLQTVKIKPDVAAFNVGVNELALKLGFGLKASDSYNAEALHQLLGNDLRPEARPGGWVGEWLAQYPDNYEVVNTLARQIKDIWKNNQHHKDGGEPYKLAQRLAMLAHEIDAVPAWNCKSGKDRTGMMDSEIKREHISLHQTHMLSAPGSLPDSGGQKIFQKVLLNSGNLEIQKQNTGGAGNKVMKN</sequence>
<reference key="1">
    <citation type="journal article" date="2000" name="Int. J. Med. Microbiol.">
        <title>Prevalence and polymorphism of genes encoding translocated effector proteins among clinical isolates of Salmonella enterica.</title>
        <authorList>
            <person name="Prager R."/>
            <person name="Mirold S."/>
            <person name="Tietze E."/>
            <person name="Strutz U."/>
            <person name="Knuppel B."/>
            <person name="Rabsch W."/>
            <person name="Hardt W.-D."/>
            <person name="Tschape H."/>
        </authorList>
    </citation>
    <scope>NUCLEOTIDE SEQUENCE [GENOMIC DNA]</scope>
    <source>
        <strain>IE1536</strain>
    </source>
</reference>
<gene>
    <name type="primary">sopB</name>
    <name type="synonym">sigD</name>
</gene>